<gene>
    <name type="ordered locus">Rpic_0619</name>
</gene>
<dbReference type="EMBL" id="CP001068">
    <property type="protein sequence ID" value="ACD25770.1"/>
    <property type="molecule type" value="Genomic_DNA"/>
</dbReference>
<dbReference type="SMR" id="B2U7A8"/>
<dbReference type="STRING" id="402626.Rpic_0619"/>
<dbReference type="KEGG" id="rpi:Rpic_0619"/>
<dbReference type="PATRIC" id="fig|402626.5.peg.1824"/>
<dbReference type="eggNOG" id="COG1678">
    <property type="taxonomic scope" value="Bacteria"/>
</dbReference>
<dbReference type="HOGENOM" id="CLU_057596_1_0_4"/>
<dbReference type="GO" id="GO:0005829">
    <property type="term" value="C:cytosol"/>
    <property type="evidence" value="ECO:0007669"/>
    <property type="project" value="TreeGrafter"/>
</dbReference>
<dbReference type="Gene3D" id="3.40.1740.10">
    <property type="entry name" value="VC0467-like"/>
    <property type="match status" value="1"/>
</dbReference>
<dbReference type="HAMAP" id="MF_00758">
    <property type="entry name" value="UPF0301"/>
    <property type="match status" value="1"/>
</dbReference>
<dbReference type="InterPro" id="IPR003774">
    <property type="entry name" value="AlgH-like"/>
</dbReference>
<dbReference type="NCBIfam" id="NF001266">
    <property type="entry name" value="PRK00228.1-1"/>
    <property type="match status" value="1"/>
</dbReference>
<dbReference type="NCBIfam" id="NF001267">
    <property type="entry name" value="PRK00228.1-2"/>
    <property type="match status" value="1"/>
</dbReference>
<dbReference type="PANTHER" id="PTHR30327">
    <property type="entry name" value="UNCHARACTERIZED PROTEIN YQGE"/>
    <property type="match status" value="1"/>
</dbReference>
<dbReference type="PANTHER" id="PTHR30327:SF1">
    <property type="entry name" value="UPF0301 PROTEIN YQGE"/>
    <property type="match status" value="1"/>
</dbReference>
<dbReference type="Pfam" id="PF02622">
    <property type="entry name" value="DUF179"/>
    <property type="match status" value="1"/>
</dbReference>
<dbReference type="SUPFAM" id="SSF143456">
    <property type="entry name" value="VC0467-like"/>
    <property type="match status" value="1"/>
</dbReference>
<protein>
    <recommendedName>
        <fullName evidence="1">UPF0301 protein Rpic_0619</fullName>
    </recommendedName>
</protein>
<feature type="chain" id="PRO_1000198288" description="UPF0301 protein Rpic_0619">
    <location>
        <begin position="1"/>
        <end position="190"/>
    </location>
</feature>
<organism>
    <name type="scientific">Ralstonia pickettii (strain 12J)</name>
    <dbReference type="NCBI Taxonomy" id="402626"/>
    <lineage>
        <taxon>Bacteria</taxon>
        <taxon>Pseudomonadati</taxon>
        <taxon>Pseudomonadota</taxon>
        <taxon>Betaproteobacteria</taxon>
        <taxon>Burkholderiales</taxon>
        <taxon>Burkholderiaceae</taxon>
        <taxon>Ralstonia</taxon>
    </lineage>
</organism>
<comment type="similarity">
    <text evidence="1">Belongs to the UPF0301 (AlgH) family.</text>
</comment>
<evidence type="ECO:0000255" key="1">
    <source>
        <dbReference type="HAMAP-Rule" id="MF_00758"/>
    </source>
</evidence>
<reference key="1">
    <citation type="submission" date="2008-05" db="EMBL/GenBank/DDBJ databases">
        <title>Complete sequence of chromosome 1 of Ralstonia pickettii 12J.</title>
        <authorList>
            <person name="Lucas S."/>
            <person name="Copeland A."/>
            <person name="Lapidus A."/>
            <person name="Glavina del Rio T."/>
            <person name="Dalin E."/>
            <person name="Tice H."/>
            <person name="Bruce D."/>
            <person name="Goodwin L."/>
            <person name="Pitluck S."/>
            <person name="Meincke L."/>
            <person name="Brettin T."/>
            <person name="Detter J.C."/>
            <person name="Han C."/>
            <person name="Kuske C.R."/>
            <person name="Schmutz J."/>
            <person name="Larimer F."/>
            <person name="Land M."/>
            <person name="Hauser L."/>
            <person name="Kyrpides N."/>
            <person name="Mikhailova N."/>
            <person name="Marsh T."/>
            <person name="Richardson P."/>
        </authorList>
    </citation>
    <scope>NUCLEOTIDE SEQUENCE [LARGE SCALE GENOMIC DNA]</scope>
    <source>
        <strain>12J</strain>
    </source>
</reference>
<accession>B2U7A8</accession>
<proteinExistence type="inferred from homology"/>
<sequence length="190" mass="20254">MASPDALINLTNQFLIAMPGMADSTFSGTVVYMCEHNERGALGLVINRPIDIDLATLFDKIDLKLEIHPLAEQSVYYGGPVQTERGFVLHDATGAYSSSLAVPGGLEMTTSKDVLEAVAQGGGPHRFILTLGYAGWSAGQLEDEISRNGWLTVQADPEIIFNVPPEERFAAALNLLGINPAMLSGEAGHA</sequence>
<name>Y619_RALPJ</name>